<name>H2J01_CYRHA</name>
<sequence length="84" mass="9257">MKVTLTAILTCAAVLVLHTTAAEELEESQLMEVGMPDTELAAVDEERLFECSVSCEIEKEGNKGCKKKKCKGGWKCKFNMCVKV</sequence>
<protein>
    <recommendedName>
        <fullName>U4-theraphotoxin-Hhn1b</fullName>
        <shortName>U4-TRTX-Hhn1b</shortName>
    </recommendedName>
    <alternativeName>
        <fullName>Hainantoxin-II-10</fullName>
        <shortName>HNTX-II-10</shortName>
    </alternativeName>
</protein>
<comment type="function">
    <text evidence="1">Postsynaptic neurotoxin.</text>
</comment>
<comment type="subcellular location">
    <subcellularLocation>
        <location evidence="1">Secreted</location>
    </subcellularLocation>
</comment>
<comment type="tissue specificity">
    <text>Expressed by the venom gland.</text>
</comment>
<comment type="similarity">
    <text evidence="3">Belongs to the neurotoxin 12 (Hwtx-2) family. 02 (Hwtx-2) subfamily.</text>
</comment>
<proteinExistence type="evidence at transcript level"/>
<accession>D2Y221</accession>
<reference key="1">
    <citation type="journal article" date="2010" name="J. Proteome Res.">
        <title>Molecular diversification of peptide toxins from the tarantula Haplopelma hainanum (Ornithoctonus hainana) venom based on transcriptomic, peptidomic, and genomic analyses.</title>
        <authorList>
            <person name="Tang X."/>
            <person name="Zhang Y."/>
            <person name="Hu W."/>
            <person name="Xu D."/>
            <person name="Tao H."/>
            <person name="Yang X."/>
            <person name="Li Y."/>
            <person name="Jiang L."/>
            <person name="Liang S."/>
        </authorList>
    </citation>
    <scope>NUCLEOTIDE SEQUENCE [LARGE SCALE MRNA]</scope>
    <source>
        <tissue>Venom gland</tissue>
    </source>
</reference>
<dbReference type="EMBL" id="GU292898">
    <property type="protein sequence ID" value="ADB56714.1"/>
    <property type="molecule type" value="mRNA"/>
</dbReference>
<dbReference type="SMR" id="D2Y221"/>
<dbReference type="ArachnoServer" id="AS001856">
    <property type="toxin name" value="U4-theraphotoxin-Hhn1b"/>
</dbReference>
<dbReference type="GO" id="GO:0005576">
    <property type="term" value="C:extracellular region"/>
    <property type="evidence" value="ECO:0007669"/>
    <property type="project" value="UniProtKB-SubCell"/>
</dbReference>
<dbReference type="GO" id="GO:0035792">
    <property type="term" value="C:host cell postsynaptic membrane"/>
    <property type="evidence" value="ECO:0007669"/>
    <property type="project" value="UniProtKB-KW"/>
</dbReference>
<dbReference type="GO" id="GO:0090729">
    <property type="term" value="F:toxin activity"/>
    <property type="evidence" value="ECO:0007669"/>
    <property type="project" value="UniProtKB-KW"/>
</dbReference>
<dbReference type="InterPro" id="IPR012625">
    <property type="entry name" value="Hwtx-2-like"/>
</dbReference>
<dbReference type="Pfam" id="PF08089">
    <property type="entry name" value="Toxin_20"/>
    <property type="match status" value="1"/>
</dbReference>
<dbReference type="SUPFAM" id="SSF57059">
    <property type="entry name" value="omega toxin-like"/>
    <property type="match status" value="1"/>
</dbReference>
<dbReference type="PROSITE" id="PS60022">
    <property type="entry name" value="HWTX_2"/>
    <property type="match status" value="1"/>
</dbReference>
<organism>
    <name type="scientific">Cyriopagopus hainanus</name>
    <name type="common">Chinese bird spider</name>
    <name type="synonym">Haplopelma hainanum</name>
    <dbReference type="NCBI Taxonomy" id="209901"/>
    <lineage>
        <taxon>Eukaryota</taxon>
        <taxon>Metazoa</taxon>
        <taxon>Ecdysozoa</taxon>
        <taxon>Arthropoda</taxon>
        <taxon>Chelicerata</taxon>
        <taxon>Arachnida</taxon>
        <taxon>Araneae</taxon>
        <taxon>Mygalomorphae</taxon>
        <taxon>Theraphosidae</taxon>
        <taxon>Haplopelma</taxon>
    </lineage>
</organism>
<evidence type="ECO:0000250" key="1"/>
<evidence type="ECO:0000255" key="2"/>
<evidence type="ECO:0000305" key="3"/>
<keyword id="KW-1015">Disulfide bond</keyword>
<keyword id="KW-0528">Neurotoxin</keyword>
<keyword id="KW-0629">Postsynaptic neurotoxin</keyword>
<keyword id="KW-0964">Secreted</keyword>
<keyword id="KW-0732">Signal</keyword>
<keyword id="KW-0800">Toxin</keyword>
<feature type="signal peptide" evidence="2">
    <location>
        <begin position="1"/>
        <end position="22"/>
    </location>
</feature>
<feature type="propeptide" id="PRO_0000400785" evidence="1">
    <location>
        <begin position="23"/>
        <end position="47"/>
    </location>
</feature>
<feature type="peptide" id="PRO_0000400786" description="U4-theraphotoxin-Hhn1b">
    <location>
        <begin position="48"/>
        <end position="84"/>
    </location>
</feature>
<feature type="disulfide bond" evidence="1">
    <location>
        <begin position="51"/>
        <end position="65"/>
    </location>
</feature>
<feature type="disulfide bond" evidence="1">
    <location>
        <begin position="55"/>
        <end position="76"/>
    </location>
</feature>
<feature type="disulfide bond" evidence="1">
    <location>
        <begin position="70"/>
        <end position="81"/>
    </location>
</feature>